<evidence type="ECO:0000269" key="1">
    <source>
    </source>
</evidence>
<evidence type="ECO:0000269" key="2">
    <source>
    </source>
</evidence>
<evidence type="ECO:0000269" key="3">
    <source>
    </source>
</evidence>
<evidence type="ECO:0000269" key="4">
    <source>
    </source>
</evidence>
<evidence type="ECO:0000269" key="5">
    <source>
    </source>
</evidence>
<evidence type="ECO:0000269" key="6">
    <source>
    </source>
</evidence>
<evidence type="ECO:0000269" key="7">
    <source>
    </source>
</evidence>
<evidence type="ECO:0000269" key="8">
    <source>
    </source>
</evidence>
<evidence type="ECO:0000303" key="9">
    <source>
    </source>
</evidence>
<evidence type="ECO:0000305" key="10"/>
<evidence type="ECO:0000312" key="11">
    <source>
        <dbReference type="EMBL" id="AAG29337.1"/>
    </source>
</evidence>
<evidence type="ECO:0000312" key="12">
    <source>
        <dbReference type="HGNC" id="HGNC:12275"/>
    </source>
</evidence>
<organism evidence="11">
    <name type="scientific">Homo sapiens</name>
    <name type="common">Human</name>
    <dbReference type="NCBI Taxonomy" id="9606"/>
    <lineage>
        <taxon>Eukaryota</taxon>
        <taxon>Metazoa</taxon>
        <taxon>Chordata</taxon>
        <taxon>Craniata</taxon>
        <taxon>Vertebrata</taxon>
        <taxon>Euteleostomi</taxon>
        <taxon>Mammalia</taxon>
        <taxon>Eutheria</taxon>
        <taxon>Euarchontoglires</taxon>
        <taxon>Primates</taxon>
        <taxon>Haplorrhini</taxon>
        <taxon>Catarrhini</taxon>
        <taxon>Hominidae</taxon>
        <taxon>Homo</taxon>
    </lineage>
</organism>
<sequence>MQMFPPSPLFFFLQLLKQSSRRLEHTFVFLRNFSLMLLRYIGKKRRATRFWDPRRGTP</sequence>
<keyword id="KW-1185">Reference proteome</keyword>
<feature type="chain" id="PRO_0000457484" description="T-cell receptor gamma alternate reading frame protein">
    <location>
        <begin position="1"/>
        <end position="58"/>
    </location>
</feature>
<name>TARP_HUMAN</name>
<reference evidence="11" key="1">
    <citation type="journal article" date="1999" name="Proc. Natl. Acad. Sci. U.S.A.">
        <title>High expression of a specific T-cell receptor gamma transcript in epithelial cells of the prostate.</title>
        <authorList>
            <person name="Essand M."/>
            <person name="Vasmatzis G."/>
            <person name="Brinkmann U."/>
            <person name="Duray P."/>
            <person name="Lee B."/>
            <person name="Pastan I."/>
        </authorList>
    </citation>
    <scope>NUCLEOTIDE SEQUENCE [MRNA]</scope>
    <scope>TISSUE SPECIFICITY</scope>
</reference>
<reference evidence="11" key="2">
    <citation type="journal article" date="2000" name="Proc. Natl. Acad. Sci. U.S.A.">
        <title>TARP: a nuclear protein expressed in prostate and breast cancer cells derived from an alternate reading frame of the T cell receptor gamma chain locus.</title>
        <authorList>
            <person name="Wolfgang C.D."/>
            <person name="Essand M."/>
            <person name="Vincent J.J."/>
            <person name="Lee B."/>
            <person name="Pastan I."/>
        </authorList>
    </citation>
    <scope>TISSUE SPECIFICITY</scope>
</reference>
<reference evidence="10" key="3">
    <citation type="journal article" date="2001" name="Cancer Res.">
        <title>T-cell receptor gamma chain alternate reading frame protein (TARP) expression in prostate cancer cells leads to an increased growth rate and induction of caveolins and amphiregulin.</title>
        <authorList>
            <person name="Wolfgang C.D."/>
            <person name="Essand M."/>
            <person name="Lee B."/>
            <person name="Pastan I."/>
        </authorList>
    </citation>
    <scope>INDUCTION</scope>
    <scope>ROLE IN PROSTATE CANCER</scope>
</reference>
<reference evidence="10" key="4">
    <citation type="journal article" date="2003" name="Endocrinology">
        <title>Characterization of the androgen-regulated prostate-specific T cell receptor gamma-chain alternate reading frame protein (TARP) promoter.</title>
        <authorList>
            <person name="Cheng W.S."/>
            <person name="Giandomenico V."/>
            <person name="Pastan I."/>
            <person name="Essand M."/>
        </authorList>
    </citation>
    <scope>INDUCTION</scope>
</reference>
<reference evidence="10" key="5">
    <citation type="journal article" date="2004" name="J. Biol. Chem.">
        <title>The T cell receptor gamma chain alternate reading frame protein (TARP), a prostate-specific protein localized in mitochondria.</title>
        <authorList>
            <person name="Maeda H."/>
            <person name="Nagata S."/>
            <person name="Wolfgang C.D."/>
            <person name="Bratthauer G.L."/>
            <person name="Bera T.K."/>
            <person name="Pastan I."/>
        </authorList>
    </citation>
    <scope>INDUCTION</scope>
    <scope>LOCALIZATION IN PROSTATE CANCER CELLS</scope>
</reference>
<reference evidence="10" key="6">
    <citation type="journal article" date="2013" name="Chin. Med. J.">
        <title>Value of T cell receptor gamma alternate reading frame protein and keratin 5 in endometrial carcinoma.</title>
        <authorList>
            <person name="Zhao L.J."/>
            <person name="Li X.P."/>
            <person name="Qi W.J."/>
            <person name="Wang J.L."/>
            <person name="Wei L.H."/>
        </authorList>
    </citation>
    <scope>TISSUE SPECIFICITY</scope>
    <scope>EXPRESSION IN ENDOMETRIAL CARCINOMA</scope>
</reference>
<reference evidence="10" key="7">
    <citation type="journal article" date="2017" name="Oral Surg. Oral Med. Oral Pathol. Oral Radiol.">
        <title>Elevated TARP promotes proliferation and metastasis of salivary adenoid cystic carcinoma.</title>
        <authorList>
            <person name="Yue H."/>
            <person name="Cai Y."/>
            <person name="Song Y."/>
            <person name="Meng L."/>
            <person name="Chen X."/>
            <person name="Wang M."/>
            <person name="Bian Z."/>
            <person name="Wang R."/>
        </authorList>
    </citation>
    <scope>TISSUE SPECIFICITY</scope>
    <scope>ROLE IN SALIVARY GLAND CANCER CELLS</scope>
</reference>
<reference evidence="10" key="8">
    <citation type="journal article" date="2020" name="Haematologica">
        <title>TARP is an immunotherapeutic target in acute myeloid leukemia expressed in the leukemic stem cell compartment.</title>
        <authorList>
            <person name="Depreter B."/>
            <person name="Weening K.E."/>
            <person name="Vandepoele K."/>
            <person name="Essand M."/>
            <person name="De Moerloose B."/>
            <person name="Themeli M."/>
            <person name="Cloos J."/>
            <person name="Hanekamp D."/>
            <person name="Moors I."/>
            <person name="D'hont I."/>
            <person name="Denys B."/>
            <person name="Uyttebroeck A."/>
            <person name="Van Damme A."/>
            <person name="Dedeken L."/>
            <person name="Snauwaert S."/>
            <person name="Goetgeluk G."/>
            <person name="De Munter S."/>
            <person name="Kerre T."/>
            <person name="Vandekerckhove B."/>
            <person name="Lammens T."/>
            <person name="Philippe J."/>
        </authorList>
    </citation>
    <scope>LOCALIZATION IN ACUTE MYELOID LEUKEMIA CELLS</scope>
</reference>
<proteinExistence type="evidence at protein level"/>
<accession>A2JGV3</accession>
<protein>
    <recommendedName>
        <fullName evidence="9">T-cell receptor gamma alternate reading frame protein</fullName>
        <shortName evidence="9">TARP</shortName>
    </recommendedName>
</protein>
<dbReference type="EMBL" id="AF151103">
    <property type="protein sequence ID" value="AAG29337.1"/>
    <property type="molecule type" value="mRNA"/>
</dbReference>
<dbReference type="CCDS" id="CCDS94087.1"/>
<dbReference type="RefSeq" id="XP_016867718.1">
    <property type="nucleotide sequence ID" value="XM_017012229.1"/>
</dbReference>
<dbReference type="RefSeq" id="XP_016867719.1">
    <property type="nucleotide sequence ID" value="XM_017012230.1"/>
</dbReference>
<dbReference type="SMR" id="A2JGV3"/>
<dbReference type="PRIDE" id="A2JGV3"/>
<dbReference type="ABCD" id="A2JGV3">
    <property type="antibodies" value="1 sequenced antibody"/>
</dbReference>
<dbReference type="DNASU" id="445347"/>
<dbReference type="KEGG" id="hsa:445347"/>
<dbReference type="MANE-Select" id="ENST00000698248.1">
    <property type="protein sequence ID" value="ENSP00000513628.1"/>
    <property type="RefSeq nucleotide sequence ID" value="NM_001003799.2"/>
    <property type="RefSeq protein sequence ID" value="NP_001003799.1"/>
</dbReference>
<dbReference type="CTD" id="445347"/>
<dbReference type="DisGeNET" id="445347"/>
<dbReference type="GeneCards" id="TRGC1"/>
<dbReference type="HGNC" id="HGNC:12275">
    <property type="gene designation" value="TRGC1"/>
</dbReference>
<dbReference type="MalaCards" id="TRGC1"/>
<dbReference type="MIM" id="609642">
    <property type="type" value="gene"/>
</dbReference>
<dbReference type="GeneTree" id="ENSGT00950000185265"/>
<dbReference type="OrthoDB" id="8924181at2759"/>
<dbReference type="BioGRID-ORCS" id="445347">
    <property type="hits" value="10 hits in 217 CRISPR screens"/>
</dbReference>
<dbReference type="GenomeRNAi" id="445347"/>
<dbReference type="Proteomes" id="UP000005640">
    <property type="component" value="Chromosome 7"/>
</dbReference>
<dbReference type="InterPro" id="IPR054133">
    <property type="entry name" value="TARP"/>
</dbReference>
<dbReference type="Pfam" id="PF21951">
    <property type="entry name" value="TARP"/>
    <property type="match status" value="1"/>
</dbReference>
<gene>
    <name evidence="12" type="primary">TRGC1</name>
</gene>
<comment type="tissue specificity">
    <text evidence="1 2 6 7">Detected at low levels in the ductal cells of the salivary gland but not in the acinar cells (at protein level) (PubMed:28153567). Expressed in endometrium (at protein level) (PubMed:24238509). Expressed in epithelial cells within the acinar ducts of the prostate (PubMed:10430935, PubMed:10931945).</text>
</comment>
<comment type="induction">
    <text evidence="3 4 5">By testosterone.</text>
</comment>
<comment type="miscellaneous">
    <text evidence="1 2">Encoded in an alternative reading frame of the T-cell receptor gamma chain gene which is composed of variable (Vgamma), joining (Jgamma), and constant (Cgamma) gene segments. Originates within an intron directly upstream of the Jgamma1.2 gene segment and contains three exons from the Cgamma1 segment.</text>
</comment>
<comment type="miscellaneous">
    <text evidence="2 3 5 6 7 8">Expressed in prostate cancer and breast cancer cells with little or no expression detected in normal breast tissue (PubMed:10931945). In prostate cancer cells, increases cell growth rate and changes expression levels of a number of genes including up-regulation of CAV1, CAV2, AREG and CXCL1/GRO1 and down-regulation of IL1B (PubMed:11719440). Localizes to the mitochondrion outer membrane in prostate cancer cells (PubMed:15150260). In acute myeloid leukemia cells, shows perinuclear staining and some localization at the endoplasmic reticulum (PubMed:31371409). Expressed at significantly higher levels in primary salivary adenoid cystic carcinomas (SACC) compared with adjacent non-cancerous tissues and promotes the proliferation, migration and invasion of SACC cells (PubMed:28153567). Expressed at higher levels in endometrial carcinomas than in normal endometrial tissue (PubMed:24238509).</text>
</comment>